<organism>
    <name type="scientific">Escherichia coli O6:H1 (strain CFT073 / ATCC 700928 / UPEC)</name>
    <dbReference type="NCBI Taxonomy" id="199310"/>
    <lineage>
        <taxon>Bacteria</taxon>
        <taxon>Pseudomonadati</taxon>
        <taxon>Pseudomonadota</taxon>
        <taxon>Gammaproteobacteria</taxon>
        <taxon>Enterobacterales</taxon>
        <taxon>Enterobacteriaceae</taxon>
        <taxon>Escherichia</taxon>
    </lineage>
</organism>
<keyword id="KW-0963">Cytoplasm</keyword>
<keyword id="KW-0249">Electron transport</keyword>
<keyword id="KW-0285">Flavoprotein</keyword>
<keyword id="KW-0288">FMN</keyword>
<keyword id="KW-0408">Iron</keyword>
<keyword id="KW-0479">Metal-binding</keyword>
<keyword id="KW-0560">Oxidoreductase</keyword>
<keyword id="KW-1185">Reference proteome</keyword>
<keyword id="KW-0813">Transport</keyword>
<gene>
    <name evidence="1" type="primary">norV</name>
    <name evidence="1" type="synonym">flrD</name>
    <name type="ordered locus">c3265/c3266</name>
</gene>
<proteinExistence type="inferred from homology"/>
<comment type="function">
    <text evidence="1">Anaerobic nitric oxide reductase; uses NADH to detoxify nitric oxide (NO), protecting several 4Fe-4S NO-sensitive enzymes. Has at least 2 reductase partners, only one of which (NorW, flavorubredoxin reductase) has been identified. NO probably binds to the di-iron center; electrons enter from the NorW at rubredoxin and are transferred sequentially to the FMN center and the di-iron center. Also able to function as an aerobic oxygen reductase.</text>
</comment>
<comment type="cofactor">
    <cofactor evidence="1">
        <name>Fe cation</name>
        <dbReference type="ChEBI" id="CHEBI:24875"/>
    </cofactor>
    <text evidence="1">Binds 3 Fe cations per monomer.</text>
</comment>
<comment type="cofactor">
    <cofactor evidence="1">
        <name>FMN</name>
        <dbReference type="ChEBI" id="CHEBI:58210"/>
    </cofactor>
    <text evidence="1">Binds 1 FMN per monomer.</text>
</comment>
<comment type="pathway">
    <text evidence="1">Nitrogen metabolism; nitric oxide reduction.</text>
</comment>
<comment type="subunit">
    <text evidence="1">Homotetramer.</text>
</comment>
<comment type="subcellular location">
    <subcellularLocation>
        <location evidence="1">Cytoplasm</location>
    </subcellularLocation>
</comment>
<comment type="similarity">
    <text evidence="1">In the N-terminal section; belongs to the zinc metallo-hydrolase group 3 family.</text>
</comment>
<comment type="sequence caution" evidence="2">
    <conflict type="frameshift">
        <sequence resource="EMBL" id="AE014075"/>
    </conflict>
</comment>
<dbReference type="EMBL" id="AE014075">
    <property type="status" value="NOT_ANNOTATED_CDS"/>
    <property type="molecule type" value="Genomic_DNA"/>
</dbReference>
<dbReference type="RefSeq" id="WP_000029616.1">
    <property type="nucleotide sequence ID" value="NZ_CP051263.1"/>
</dbReference>
<dbReference type="SMR" id="P59404"/>
<dbReference type="UniPathway" id="UPA00638"/>
<dbReference type="Proteomes" id="UP000001410">
    <property type="component" value="Chromosome"/>
</dbReference>
<dbReference type="GO" id="GO:0005737">
    <property type="term" value="C:cytoplasm"/>
    <property type="evidence" value="ECO:0007669"/>
    <property type="project" value="UniProtKB-SubCell"/>
</dbReference>
<dbReference type="GO" id="GO:0009055">
    <property type="term" value="F:electron transfer activity"/>
    <property type="evidence" value="ECO:0007669"/>
    <property type="project" value="UniProtKB-UniRule"/>
</dbReference>
<dbReference type="GO" id="GO:0010181">
    <property type="term" value="F:FMN binding"/>
    <property type="evidence" value="ECO:0007669"/>
    <property type="project" value="InterPro"/>
</dbReference>
<dbReference type="GO" id="GO:0005506">
    <property type="term" value="F:iron ion binding"/>
    <property type="evidence" value="ECO:0007669"/>
    <property type="project" value="InterPro"/>
</dbReference>
<dbReference type="GO" id="GO:0016966">
    <property type="term" value="F:nitric oxide reductase activity"/>
    <property type="evidence" value="ECO:0007669"/>
    <property type="project" value="InterPro"/>
</dbReference>
<dbReference type="CDD" id="cd07709">
    <property type="entry name" value="flavodiiron_proteins_MBL-fold"/>
    <property type="match status" value="1"/>
</dbReference>
<dbReference type="CDD" id="cd00730">
    <property type="entry name" value="rubredoxin"/>
    <property type="match status" value="1"/>
</dbReference>
<dbReference type="FunFam" id="2.20.28.10:FF:000010">
    <property type="entry name" value="Anaerobic nitric oxide reductase flavorubredoxin"/>
    <property type="match status" value="1"/>
</dbReference>
<dbReference type="FunFam" id="3.40.50.360:FF:000012">
    <property type="entry name" value="Anaerobic nitric oxide reductase flavorubredoxin"/>
    <property type="match status" value="1"/>
</dbReference>
<dbReference type="FunFam" id="3.60.15.10:FF:000009">
    <property type="entry name" value="Anaerobic nitric oxide reductase flavorubredoxin"/>
    <property type="match status" value="1"/>
</dbReference>
<dbReference type="Gene3D" id="2.20.28.10">
    <property type="match status" value="1"/>
</dbReference>
<dbReference type="Gene3D" id="3.40.50.360">
    <property type="match status" value="1"/>
</dbReference>
<dbReference type="Gene3D" id="3.60.15.10">
    <property type="entry name" value="Ribonuclease Z/Hydroxyacylglutathione hydrolase-like"/>
    <property type="match status" value="1"/>
</dbReference>
<dbReference type="HAMAP" id="MF_01312">
    <property type="entry name" value="NorV"/>
    <property type="match status" value="1"/>
</dbReference>
<dbReference type="InterPro" id="IPR023957">
    <property type="entry name" value="Anaer_NO_rdtase_flvorubredoxin"/>
</dbReference>
<dbReference type="InterPro" id="IPR008254">
    <property type="entry name" value="Flavodoxin/NO_synth"/>
</dbReference>
<dbReference type="InterPro" id="IPR029039">
    <property type="entry name" value="Flavoprotein-like_sf"/>
</dbReference>
<dbReference type="InterPro" id="IPR001279">
    <property type="entry name" value="Metallo-B-lactamas"/>
</dbReference>
<dbReference type="InterPro" id="IPR045761">
    <property type="entry name" value="ODP_dom"/>
</dbReference>
<dbReference type="InterPro" id="IPR036866">
    <property type="entry name" value="RibonucZ/Hydroxyglut_hydro"/>
</dbReference>
<dbReference type="InterPro" id="IPR024934">
    <property type="entry name" value="Rubredoxin-like_dom"/>
</dbReference>
<dbReference type="InterPro" id="IPR016440">
    <property type="entry name" value="Rubredoxin-O_OxRdtase"/>
</dbReference>
<dbReference type="InterPro" id="IPR024935">
    <property type="entry name" value="Rubredoxin_dom"/>
</dbReference>
<dbReference type="NCBIfam" id="NF003954">
    <property type="entry name" value="PRK05452.1"/>
    <property type="match status" value="1"/>
</dbReference>
<dbReference type="PANTHER" id="PTHR43717">
    <property type="entry name" value="ANAEROBIC NITRIC OXIDE REDUCTASE FLAVORUBREDOXIN"/>
    <property type="match status" value="1"/>
</dbReference>
<dbReference type="PANTHER" id="PTHR43717:SF1">
    <property type="entry name" value="ANAEROBIC NITRIC OXIDE REDUCTASE FLAVORUBREDOXIN"/>
    <property type="match status" value="1"/>
</dbReference>
<dbReference type="Pfam" id="PF00258">
    <property type="entry name" value="Flavodoxin_1"/>
    <property type="match status" value="1"/>
</dbReference>
<dbReference type="Pfam" id="PF19583">
    <property type="entry name" value="ODP"/>
    <property type="match status" value="1"/>
</dbReference>
<dbReference type="Pfam" id="PF00301">
    <property type="entry name" value="Rubredoxin"/>
    <property type="match status" value="1"/>
</dbReference>
<dbReference type="PIRSF" id="PIRSF005243">
    <property type="entry name" value="ROO"/>
    <property type="match status" value="1"/>
</dbReference>
<dbReference type="PRINTS" id="PR00163">
    <property type="entry name" value="RUBREDOXIN"/>
</dbReference>
<dbReference type="SMART" id="SM00849">
    <property type="entry name" value="Lactamase_B"/>
    <property type="match status" value="1"/>
</dbReference>
<dbReference type="SUPFAM" id="SSF52218">
    <property type="entry name" value="Flavoproteins"/>
    <property type="match status" value="1"/>
</dbReference>
<dbReference type="SUPFAM" id="SSF56281">
    <property type="entry name" value="Metallo-hydrolase/oxidoreductase"/>
    <property type="match status" value="1"/>
</dbReference>
<dbReference type="SUPFAM" id="SSF57802">
    <property type="entry name" value="Rubredoxin-like"/>
    <property type="match status" value="1"/>
</dbReference>
<dbReference type="PROSITE" id="PS50902">
    <property type="entry name" value="FLAVODOXIN_LIKE"/>
    <property type="match status" value="1"/>
</dbReference>
<dbReference type="PROSITE" id="PS50903">
    <property type="entry name" value="RUBREDOXIN_LIKE"/>
    <property type="match status" value="1"/>
</dbReference>
<evidence type="ECO:0000255" key="1">
    <source>
        <dbReference type="HAMAP-Rule" id="MF_01312"/>
    </source>
</evidence>
<evidence type="ECO:0000305" key="2"/>
<accession>P59404</accession>
<feature type="chain" id="PRO_0000216786" description="Anaerobic nitric oxide reductase flavorubredoxin">
    <location>
        <begin position="1"/>
        <end position="479"/>
    </location>
</feature>
<feature type="domain" description="Flavodoxin-like" evidence="1">
    <location>
        <begin position="254"/>
        <end position="393"/>
    </location>
</feature>
<feature type="domain" description="Rubredoxin-like" evidence="1">
    <location>
        <begin position="423"/>
        <end position="474"/>
    </location>
</feature>
<feature type="region of interest" description="Zinc metallo-hydrolase">
    <location>
        <begin position="30"/>
        <end position="210"/>
    </location>
</feature>
<feature type="binding site" evidence="1">
    <location>
        <position position="79"/>
    </location>
    <ligand>
        <name>Fe cation</name>
        <dbReference type="ChEBI" id="CHEBI:24875"/>
        <label>1</label>
    </ligand>
</feature>
<feature type="binding site" evidence="1">
    <location>
        <position position="81"/>
    </location>
    <ligand>
        <name>Fe cation</name>
        <dbReference type="ChEBI" id="CHEBI:24875"/>
        <label>1</label>
    </ligand>
</feature>
<feature type="binding site" evidence="1">
    <location>
        <position position="83"/>
    </location>
    <ligand>
        <name>Fe cation</name>
        <dbReference type="ChEBI" id="CHEBI:24875"/>
        <label>2</label>
    </ligand>
</feature>
<feature type="binding site" evidence="1">
    <location>
        <position position="147"/>
    </location>
    <ligand>
        <name>Fe cation</name>
        <dbReference type="ChEBI" id="CHEBI:24875"/>
        <label>1</label>
    </ligand>
</feature>
<feature type="binding site" evidence="1">
    <location>
        <position position="166"/>
    </location>
    <ligand>
        <name>Fe cation</name>
        <dbReference type="ChEBI" id="CHEBI:24875"/>
        <label>1</label>
    </ligand>
</feature>
<feature type="binding site" evidence="1">
    <location>
        <position position="166"/>
    </location>
    <ligand>
        <name>Fe cation</name>
        <dbReference type="ChEBI" id="CHEBI:24875"/>
        <label>2</label>
    </ligand>
</feature>
<feature type="binding site" evidence="1">
    <location>
        <position position="227"/>
    </location>
    <ligand>
        <name>Fe cation</name>
        <dbReference type="ChEBI" id="CHEBI:24875"/>
        <label>2</label>
    </ligand>
</feature>
<feature type="binding site" evidence="1">
    <location>
        <begin position="260"/>
        <end position="264"/>
    </location>
    <ligand>
        <name>FMN</name>
        <dbReference type="ChEBI" id="CHEBI:58210"/>
    </ligand>
</feature>
<feature type="binding site" evidence="1">
    <location>
        <begin position="342"/>
        <end position="369"/>
    </location>
    <ligand>
        <name>FMN</name>
        <dbReference type="ChEBI" id="CHEBI:58210"/>
    </ligand>
</feature>
<feature type="binding site" evidence="1">
    <location>
        <position position="428"/>
    </location>
    <ligand>
        <name>Fe cation</name>
        <dbReference type="ChEBI" id="CHEBI:24875"/>
        <label>3</label>
    </ligand>
</feature>
<feature type="binding site" evidence="1">
    <location>
        <position position="431"/>
    </location>
    <ligand>
        <name>Fe cation</name>
        <dbReference type="ChEBI" id="CHEBI:24875"/>
        <label>3</label>
    </ligand>
</feature>
<feature type="binding site" evidence="1">
    <location>
        <position position="461"/>
    </location>
    <ligand>
        <name>Fe cation</name>
        <dbReference type="ChEBI" id="CHEBI:24875"/>
        <label>3</label>
    </ligand>
</feature>
<feature type="binding site" evidence="1">
    <location>
        <position position="464"/>
    </location>
    <ligand>
        <name>Fe cation</name>
        <dbReference type="ChEBI" id="CHEBI:24875"/>
        <label>3</label>
    </ligand>
</feature>
<protein>
    <recommendedName>
        <fullName evidence="1">Anaerobic nitric oxide reductase flavorubredoxin</fullName>
        <shortName evidence="1">FlRd</shortName>
        <shortName evidence="1">FlavoRb</shortName>
    </recommendedName>
</protein>
<reference key="1">
    <citation type="journal article" date="2002" name="Proc. Natl. Acad. Sci. U.S.A.">
        <title>Extensive mosaic structure revealed by the complete genome sequence of uropathogenic Escherichia coli.</title>
        <authorList>
            <person name="Welch R.A."/>
            <person name="Burland V."/>
            <person name="Plunkett G. III"/>
            <person name="Redford P."/>
            <person name="Roesch P."/>
            <person name="Rasko D."/>
            <person name="Buckles E.L."/>
            <person name="Liou S.-R."/>
            <person name="Boutin A."/>
            <person name="Hackett J."/>
            <person name="Stroud D."/>
            <person name="Mayhew G.F."/>
            <person name="Rose D.J."/>
            <person name="Zhou S."/>
            <person name="Schwartz D.C."/>
            <person name="Perna N.T."/>
            <person name="Mobley H.L.T."/>
            <person name="Donnenberg M.S."/>
            <person name="Blattner F.R."/>
        </authorList>
    </citation>
    <scope>NUCLEOTIDE SEQUENCE [LARGE SCALE GENOMIC DNA]</scope>
    <source>
        <strain>CFT073 / ATCC 700928 / UPEC</strain>
    </source>
</reference>
<name>NORV_ECOL6</name>
<sequence length="479" mass="54191">MSIVVKNNIHWVGQRDWEVRDFHGTEYKTLRGSSYNSYLIREEKNVLIDTVDHKFSREFVQNLRNEIDLADIDYIVINHAEEDHAGALTELMAQIPDTPIYCTANAIDSINGHHHHPEWNFNVVKTGDTLDIGNGKQLIFVETPMLHWPDSMMTYLTGDAVLFSNDAFGQHYCDEHLFNDEVDQTELFEQCQRYYANILTPFSRLVTPKITEILGFNLPVDMIATSHGVVWRDNPTQIVELYLKWAADYQEDRITIFYDTMSNNTRMMADAIAQGIAETDPRVAVKIFNVARSDKNEILTNVFRSKGVLVGTSTMNNVMMPKIAGLVEEMTGLRFRNKRASAFGSHGWSGGAVDRLSTRLQDAGFEMSLSLKAKWRPDQDALELCREHGREIARQWALAPLPQSTVNTVVKEETSAATTADLGPRMQCSVCQWIYDPAKGEPMQDVAPGTPWSEVPDNFLCPECSLGKDVFDELASEAK</sequence>